<feature type="signal peptide" evidence="2">
    <location>
        <begin position="1"/>
        <end position="22"/>
    </location>
</feature>
<feature type="chain" id="PRO_0000380659" description="Cysteine-rich venom protein VAR8">
    <location>
        <begin position="23"/>
        <end position="200" status="greater than"/>
    </location>
</feature>
<feature type="domain" description="SCP">
    <location>
        <begin position="41"/>
        <end position="169"/>
    </location>
</feature>
<feature type="disulfide bond" evidence="1">
    <location>
        <begin position="77"/>
        <end position="156"/>
    </location>
</feature>
<feature type="disulfide bond" evidence="1">
    <location>
        <begin position="95"/>
        <end position="170"/>
    </location>
</feature>
<feature type="disulfide bond" evidence="1">
    <location>
        <begin position="151"/>
        <end position="167"/>
    </location>
</feature>
<feature type="disulfide bond" evidence="1">
    <location>
        <begin position="189"/>
        <end position="196"/>
    </location>
</feature>
<feature type="non-terminal residue">
    <location>
        <position position="200"/>
    </location>
</feature>
<comment type="function">
    <text evidence="1">Blocks ryanodine receptors, and potassium channels.</text>
</comment>
<comment type="subcellular location">
    <subcellularLocation>
        <location evidence="1">Secreted</location>
    </subcellularLocation>
</comment>
<comment type="tissue specificity">
    <text>Expressed by the venom gland.</text>
</comment>
<comment type="PTM">
    <text evidence="1">Contains 8 disulfide bonds.</text>
</comment>
<comment type="similarity">
    <text evidence="3">Belongs to the CRISP family.</text>
</comment>
<accession>Q2XXQ7</accession>
<dbReference type="EMBL" id="DQ139888">
    <property type="protein sequence ID" value="AAZ75594.1"/>
    <property type="molecule type" value="mRNA"/>
</dbReference>
<dbReference type="SMR" id="Q2XXQ7"/>
<dbReference type="GO" id="GO:0005576">
    <property type="term" value="C:extracellular region"/>
    <property type="evidence" value="ECO:0007669"/>
    <property type="project" value="UniProtKB-SubCell"/>
</dbReference>
<dbReference type="GO" id="GO:0005246">
    <property type="term" value="F:calcium channel regulator activity"/>
    <property type="evidence" value="ECO:0007669"/>
    <property type="project" value="UniProtKB-KW"/>
</dbReference>
<dbReference type="GO" id="GO:0015459">
    <property type="term" value="F:potassium channel regulator activity"/>
    <property type="evidence" value="ECO:0007669"/>
    <property type="project" value="UniProtKB-KW"/>
</dbReference>
<dbReference type="GO" id="GO:0090729">
    <property type="term" value="F:toxin activity"/>
    <property type="evidence" value="ECO:0007669"/>
    <property type="project" value="UniProtKB-KW"/>
</dbReference>
<dbReference type="CDD" id="cd05383">
    <property type="entry name" value="CAP_CRISP"/>
    <property type="match status" value="1"/>
</dbReference>
<dbReference type="FunFam" id="3.40.33.10:FF:000005">
    <property type="entry name" value="Cysteine-rich secretory protein 2"/>
    <property type="match status" value="1"/>
</dbReference>
<dbReference type="Gene3D" id="3.40.33.10">
    <property type="entry name" value="CAP"/>
    <property type="match status" value="1"/>
</dbReference>
<dbReference type="InterPro" id="IPR018244">
    <property type="entry name" value="Allrgn_V5/Tpx1_CS"/>
</dbReference>
<dbReference type="InterPro" id="IPR014044">
    <property type="entry name" value="CAP_dom"/>
</dbReference>
<dbReference type="InterPro" id="IPR035940">
    <property type="entry name" value="CAP_sf"/>
</dbReference>
<dbReference type="InterPro" id="IPR001283">
    <property type="entry name" value="CRISP-related"/>
</dbReference>
<dbReference type="InterPro" id="IPR034117">
    <property type="entry name" value="SCP_CRISP"/>
</dbReference>
<dbReference type="PANTHER" id="PTHR10334">
    <property type="entry name" value="CYSTEINE-RICH SECRETORY PROTEIN-RELATED"/>
    <property type="match status" value="1"/>
</dbReference>
<dbReference type="Pfam" id="PF00188">
    <property type="entry name" value="CAP"/>
    <property type="match status" value="1"/>
</dbReference>
<dbReference type="PRINTS" id="PR00837">
    <property type="entry name" value="V5TPXLIKE"/>
</dbReference>
<dbReference type="SMART" id="SM00198">
    <property type="entry name" value="SCP"/>
    <property type="match status" value="1"/>
</dbReference>
<dbReference type="SUPFAM" id="SSF55797">
    <property type="entry name" value="PR-1-like"/>
    <property type="match status" value="1"/>
</dbReference>
<dbReference type="PROSITE" id="PS01009">
    <property type="entry name" value="CRISP_1"/>
    <property type="match status" value="1"/>
</dbReference>
<dbReference type="PROSITE" id="PS01010">
    <property type="entry name" value="CRISP_2"/>
    <property type="match status" value="1"/>
</dbReference>
<organism>
    <name type="scientific">Varanus acanthurus</name>
    <name type="common">Ridge-tailed monitor</name>
    <dbReference type="NCBI Taxonomy" id="62035"/>
    <lineage>
        <taxon>Eukaryota</taxon>
        <taxon>Metazoa</taxon>
        <taxon>Chordata</taxon>
        <taxon>Craniata</taxon>
        <taxon>Vertebrata</taxon>
        <taxon>Euteleostomi</taxon>
        <taxon>Lepidosauria</taxon>
        <taxon>Squamata</taxon>
        <taxon>Bifurcata</taxon>
        <taxon>Unidentata</taxon>
        <taxon>Episquamata</taxon>
        <taxon>Toxicofera</taxon>
        <taxon>Anguimorpha</taxon>
        <taxon>Paleoanguimorpha</taxon>
        <taxon>Varanoidea</taxon>
        <taxon>Varanidae</taxon>
        <taxon>Varanus</taxon>
    </lineage>
</organism>
<evidence type="ECO:0000250" key="1"/>
<evidence type="ECO:0000255" key="2"/>
<evidence type="ECO:0000305" key="3"/>
<name>CRVP8_VARAC</name>
<proteinExistence type="evidence at transcript level"/>
<keyword id="KW-0108">Calcium channel impairing toxin</keyword>
<keyword id="KW-1015">Disulfide bond</keyword>
<keyword id="KW-0872">Ion channel impairing toxin</keyword>
<keyword id="KW-0528">Neurotoxin</keyword>
<keyword id="KW-0632">Potassium channel impairing toxin</keyword>
<keyword id="KW-0964">Secreted</keyword>
<keyword id="KW-0732">Signal</keyword>
<keyword id="KW-0800">Toxin</keyword>
<protein>
    <recommendedName>
        <fullName>Cysteine-rich venom protein VAR8</fullName>
        <shortName>CRVP</shortName>
    </recommendedName>
    <alternativeName>
        <fullName>Cysteine-rich secretory protein VAR8</fullName>
        <shortName>CRISP-VAR8</shortName>
    </alternativeName>
</protein>
<reference key="1">
    <citation type="journal article" date="2006" name="Nature">
        <title>Early evolution of the venom system in lizards and snakes.</title>
        <authorList>
            <person name="Fry B.G."/>
            <person name="Vidal N."/>
            <person name="Norman J.A."/>
            <person name="Vonk F.J."/>
            <person name="Scheib H."/>
            <person name="Ramjan S.F.R."/>
            <person name="Kuruppu S."/>
            <person name="Fung K."/>
            <person name="Blair Hedges S."/>
            <person name="Richardson M.K."/>
            <person name="Hodgson W.C."/>
            <person name="Ignjatovic V."/>
            <person name="Summerhayes R."/>
            <person name="Kochva E."/>
        </authorList>
    </citation>
    <scope>NUCLEOTIDE SEQUENCE [LARGE SCALE MRNA]</scope>
    <source>
        <tissue>Venom gland</tissue>
    </source>
</reference>
<sequence>MILLKLYLTLAAILCQSRGTTSLDLDDLMTTNPEIQNEIINKHNDLRRTVDPPAKNMLKMSWDNTIAESAKRAALRCNQNEHTPVSGRTIGGVVCGENYFMSSNLRTWSFGIQSWFDERNYFKFGFGPTRAGVMVGHYTQVVWYKSYKMGCAINLCPNEPLKYFLVCQYCPGGNVVGRKYEPYAIGEPCAACPNNCDNGL</sequence>